<proteinExistence type="inferred from homology"/>
<organism>
    <name type="scientific">Chlamydomonas applanata</name>
    <name type="common">Chlamydomonas humicola</name>
    <dbReference type="NCBI Taxonomy" id="35704"/>
    <lineage>
        <taxon>Eukaryota</taxon>
        <taxon>Viridiplantae</taxon>
        <taxon>Chlorophyta</taxon>
        <taxon>core chlorophytes</taxon>
        <taxon>Chlorophyceae</taxon>
        <taxon>CS clade</taxon>
        <taxon>Chlamydomonadales</taxon>
        <taxon>Chlamydomonadaceae</taxon>
        <taxon>Chlamydomonas</taxon>
    </lineage>
</organism>
<gene>
    <name type="primary">chlB</name>
</gene>
<comment type="function">
    <text evidence="1">Component of the dark-operative protochlorophyllide reductase (DPOR) that uses Mg-ATP and reduced ferredoxin to reduce ring D of protochlorophyllide (Pchlide) to form chlorophyllide a (Chlide). This reaction is light-independent. The NB-protein (ChlN-ChlB) is the catalytic component of the complex (By similarity).</text>
</comment>
<comment type="catalytic activity">
    <reaction>
        <text>chlorophyllide a + oxidized 2[4Fe-4S]-[ferredoxin] + 2 ADP + 2 phosphate = protochlorophyllide a + reduced 2[4Fe-4S]-[ferredoxin] + 2 ATP + 2 H2O</text>
        <dbReference type="Rhea" id="RHEA:28202"/>
        <dbReference type="Rhea" id="RHEA-COMP:10002"/>
        <dbReference type="Rhea" id="RHEA-COMP:10004"/>
        <dbReference type="ChEBI" id="CHEBI:15377"/>
        <dbReference type="ChEBI" id="CHEBI:30616"/>
        <dbReference type="ChEBI" id="CHEBI:33722"/>
        <dbReference type="ChEBI" id="CHEBI:33723"/>
        <dbReference type="ChEBI" id="CHEBI:43474"/>
        <dbReference type="ChEBI" id="CHEBI:83348"/>
        <dbReference type="ChEBI" id="CHEBI:83350"/>
        <dbReference type="ChEBI" id="CHEBI:456216"/>
        <dbReference type="EC" id="1.3.7.7"/>
    </reaction>
</comment>
<comment type="cofactor">
    <cofactor evidence="1">
        <name>[4Fe-4S] cluster</name>
        <dbReference type="ChEBI" id="CHEBI:49883"/>
    </cofactor>
    <text evidence="1">Binds 1 [4Fe-4S] cluster per heterodimer. The cluster is bound at the heterodimer interface by residues from both subunits.</text>
</comment>
<comment type="pathway">
    <text>Porphyrin-containing compound metabolism; chlorophyll biosynthesis (light-independent).</text>
</comment>
<comment type="subunit">
    <text evidence="1">Protochlorophyllide reductase is composed of three subunits; ChlL, ChlN and ChlB. Forms a heterotetramer of two ChlB and two ChlN subunits (By similarity).</text>
</comment>
<comment type="subcellular location">
    <subcellularLocation>
        <location>Plastid</location>
        <location>Chloroplast</location>
    </subcellularLocation>
</comment>
<comment type="similarity">
    <text evidence="3">Belongs to the ChlB/BchB/BchZ family.</text>
</comment>
<feature type="chain" id="PRO_0000219813" description="Light-independent protochlorophyllide reductase subunit B">
    <location>
        <begin position="1"/>
        <end position="431" status="greater than"/>
    </location>
</feature>
<feature type="region of interest" description="Disordered" evidence="2">
    <location>
        <begin position="150"/>
        <end position="187"/>
    </location>
</feature>
<feature type="active site" description="Proton donor" evidence="1">
    <location>
        <position position="341"/>
    </location>
</feature>
<feature type="binding site" evidence="1">
    <location>
        <position position="36"/>
    </location>
    <ligand>
        <name>[4Fe-4S] cluster</name>
        <dbReference type="ChEBI" id="CHEBI:49883"/>
        <note>ligand shared with heterodimeric partner</note>
    </ligand>
</feature>
<feature type="non-terminal residue">
    <location>
        <position position="431"/>
    </location>
</feature>
<sequence>MKLAESMYAGPAHIGTLRVASSFRNVHAIMHAPLGDDYFNVMRSMLERERDFTPVTASIVDRHVLARGSQEKVVENIQRKDKEESPDLILLTPTCTSSILQEDLQNFVNRASETSTSDVLLADVNHYRVNELQAADRTLEQIVRFYIEKTRAKDPGSPDPGGAGRRQASSSTESGTEENLKGACGGEKTKKPSANILGMFTLGFHNQHDCRELKRLLAELDIEVNEVIPEGGLVSNLKNLPKAWFNIVPYREVGLMTAVYLEKEFGMPYTSTTPMGIIQTSAFIREMALMCHEVYNNSSTKCSQTDFESCLISNTKKVPKTYINKQTHFVSQAGWFARSIDCQNLTGQKTVVFGDATHAASMTKILVREMGIHVVCAGTYCKHDADWFREQVSGFCDQVLITDDHSQIGDIISQIEPAAIFGTQMERHIGK</sequence>
<protein>
    <recommendedName>
        <fullName>Light-independent protochlorophyllide reductase subunit B</fullName>
        <shortName>DPOR subunit B</shortName>
        <shortName>LI-POR subunit B</shortName>
        <ecNumber>1.3.7.7</ecNumber>
    </recommendedName>
</protein>
<dbReference type="EC" id="1.3.7.7"/>
<dbReference type="SMR" id="P37823"/>
<dbReference type="UniPathway" id="UPA00670"/>
<dbReference type="GO" id="GO:0009507">
    <property type="term" value="C:chloroplast"/>
    <property type="evidence" value="ECO:0007669"/>
    <property type="project" value="UniProtKB-SubCell"/>
</dbReference>
<dbReference type="GO" id="GO:0051539">
    <property type="term" value="F:4 iron, 4 sulfur cluster binding"/>
    <property type="evidence" value="ECO:0007669"/>
    <property type="project" value="UniProtKB-KW"/>
</dbReference>
<dbReference type="GO" id="GO:0005524">
    <property type="term" value="F:ATP binding"/>
    <property type="evidence" value="ECO:0007669"/>
    <property type="project" value="UniProtKB-KW"/>
</dbReference>
<dbReference type="GO" id="GO:0046872">
    <property type="term" value="F:metal ion binding"/>
    <property type="evidence" value="ECO:0007669"/>
    <property type="project" value="UniProtKB-KW"/>
</dbReference>
<dbReference type="GO" id="GO:0016730">
    <property type="term" value="F:oxidoreductase activity, acting on iron-sulfur proteins as donors"/>
    <property type="evidence" value="ECO:0007669"/>
    <property type="project" value="InterPro"/>
</dbReference>
<dbReference type="GO" id="GO:0036068">
    <property type="term" value="P:light-independent chlorophyll biosynthetic process"/>
    <property type="evidence" value="ECO:0007669"/>
    <property type="project" value="UniProtKB-UniPathway"/>
</dbReference>
<dbReference type="GO" id="GO:0019685">
    <property type="term" value="P:photosynthesis, dark reaction"/>
    <property type="evidence" value="ECO:0007669"/>
    <property type="project" value="InterPro"/>
</dbReference>
<dbReference type="CDD" id="cd01981">
    <property type="entry name" value="Pchlide_reductase_B"/>
    <property type="match status" value="1"/>
</dbReference>
<dbReference type="Gene3D" id="1.20.89.20">
    <property type="match status" value="1"/>
</dbReference>
<dbReference type="Gene3D" id="3.40.50.1980">
    <property type="entry name" value="Nitrogenase molybdenum iron protein domain"/>
    <property type="match status" value="3"/>
</dbReference>
<dbReference type="InterPro" id="IPR050152">
    <property type="entry name" value="ChlB/BchB/BchZ"/>
</dbReference>
<dbReference type="InterPro" id="IPR000510">
    <property type="entry name" value="Nase/OxRdtase_comp1"/>
</dbReference>
<dbReference type="InterPro" id="IPR005969">
    <property type="entry name" value="Protochl_reductB"/>
</dbReference>
<dbReference type="NCBIfam" id="TIGR01278">
    <property type="entry name" value="DPOR_BchB"/>
    <property type="match status" value="1"/>
</dbReference>
<dbReference type="PANTHER" id="PTHR33712">
    <property type="entry name" value="LIGHT-INDEPENDENT PROTOCHLOROPHYLLIDE REDUCTASE SUBUNIT B"/>
    <property type="match status" value="1"/>
</dbReference>
<dbReference type="PANTHER" id="PTHR33712:SF7">
    <property type="entry name" value="LIGHT-INDEPENDENT PROTOCHLOROPHYLLIDE REDUCTASE SUBUNIT B"/>
    <property type="match status" value="1"/>
</dbReference>
<dbReference type="Pfam" id="PF00148">
    <property type="entry name" value="Oxidored_nitro"/>
    <property type="match status" value="1"/>
</dbReference>
<dbReference type="SUPFAM" id="SSF53807">
    <property type="entry name" value="Helical backbone' metal receptor"/>
    <property type="match status" value="1"/>
</dbReference>
<accession>P37823</accession>
<reference key="1">
    <citation type="journal article" date="1993" name="Plant Mol. Biol.">
        <title>Chloroplast chlB gene is required for light-independent chlorophyll accumulation in Chlamydomonas reinhardtii.</title>
        <authorList>
            <person name="Liu X.-Q."/>
            <person name="Xu H."/>
            <person name="Huang C."/>
        </authorList>
    </citation>
    <scope>NUCLEOTIDE SEQUENCE [GENOMIC DNA]</scope>
</reference>
<keyword id="KW-0004">4Fe-4S</keyword>
<keyword id="KW-0067">ATP-binding</keyword>
<keyword id="KW-0149">Chlorophyll biosynthesis</keyword>
<keyword id="KW-0150">Chloroplast</keyword>
<keyword id="KW-0408">Iron</keyword>
<keyword id="KW-0411">Iron-sulfur</keyword>
<keyword id="KW-0479">Metal-binding</keyword>
<keyword id="KW-0547">Nucleotide-binding</keyword>
<keyword id="KW-0560">Oxidoreductase</keyword>
<keyword id="KW-0602">Photosynthesis</keyword>
<keyword id="KW-0934">Plastid</keyword>
<name>CHLB_CHLAP</name>
<evidence type="ECO:0000250" key="1"/>
<evidence type="ECO:0000256" key="2">
    <source>
        <dbReference type="SAM" id="MobiDB-lite"/>
    </source>
</evidence>
<evidence type="ECO:0000305" key="3"/>
<geneLocation type="chloroplast"/>